<evidence type="ECO:0000250" key="1">
    <source>
        <dbReference type="UniProtKB" id="P49279"/>
    </source>
</evidence>
<evidence type="ECO:0000255" key="2"/>
<evidence type="ECO:0000256" key="3">
    <source>
        <dbReference type="SAM" id="MobiDB-lite"/>
    </source>
</evidence>
<evidence type="ECO:0000305" key="4"/>
<feature type="chain" id="PRO_0000212590" description="Natural resistance-associated macrophage protein 1">
    <location>
        <begin position="1"/>
        <end position="538"/>
    </location>
</feature>
<feature type="topological domain" description="Cytoplasmic" evidence="2">
    <location>
        <begin position="1"/>
        <end position="54"/>
    </location>
</feature>
<feature type="transmembrane region" description="Helical" evidence="2">
    <location>
        <begin position="55"/>
        <end position="75"/>
    </location>
</feature>
<feature type="topological domain" description="Extracellular" evidence="2">
    <location>
        <begin position="76"/>
        <end position="81"/>
    </location>
</feature>
<feature type="transmembrane region" description="Helical" evidence="2">
    <location>
        <begin position="82"/>
        <end position="102"/>
    </location>
</feature>
<feature type="topological domain" description="Cytoplasmic" evidence="2">
    <location>
        <begin position="103"/>
        <end position="139"/>
    </location>
</feature>
<feature type="transmembrane region" description="Helical" evidence="2">
    <location>
        <begin position="140"/>
        <end position="160"/>
    </location>
</feature>
<feature type="topological domain" description="Extracellular" evidence="2">
    <location>
        <begin position="161"/>
        <end position="164"/>
    </location>
</feature>
<feature type="transmembrane region" description="Helical" evidence="2">
    <location>
        <begin position="165"/>
        <end position="185"/>
    </location>
</feature>
<feature type="topological domain" description="Cytoplasmic" evidence="2">
    <location>
        <begin position="186"/>
        <end position="193"/>
    </location>
</feature>
<feature type="transmembrane region" description="Helical" evidence="2">
    <location>
        <begin position="194"/>
        <end position="214"/>
    </location>
</feature>
<feature type="topological domain" description="Extracellular" evidence="2">
    <location>
        <begin position="215"/>
        <end position="240"/>
    </location>
</feature>
<feature type="transmembrane region" description="Helical" evidence="2">
    <location>
        <begin position="241"/>
        <end position="261"/>
    </location>
</feature>
<feature type="topological domain" description="Cytoplasmic" evidence="2">
    <location>
        <begin position="262"/>
        <end position="286"/>
    </location>
</feature>
<feature type="transmembrane region" description="Helical" evidence="2">
    <location>
        <begin position="287"/>
        <end position="307"/>
    </location>
</feature>
<feature type="topological domain" description="Extracellular" evidence="2">
    <location>
        <begin position="308"/>
        <end position="346"/>
    </location>
</feature>
<feature type="transmembrane region" description="Helical" evidence="2">
    <location>
        <begin position="347"/>
        <end position="367"/>
    </location>
</feature>
<feature type="topological domain" description="Cytoplasmic" evidence="2">
    <location>
        <begin position="368"/>
        <end position="394"/>
    </location>
</feature>
<feature type="transmembrane region" description="Helical" evidence="2">
    <location>
        <begin position="395"/>
        <end position="415"/>
    </location>
</feature>
<feature type="topological domain" description="Extracellular" evidence="2">
    <location>
        <begin position="416"/>
        <end position="432"/>
    </location>
</feature>
<feature type="transmembrane region" description="Helical" evidence="2">
    <location>
        <begin position="433"/>
        <end position="453"/>
    </location>
</feature>
<feature type="topological domain" description="Cytoplasmic" evidence="2">
    <location>
        <begin position="454"/>
        <end position="468"/>
    </location>
</feature>
<feature type="transmembrane region" description="Helical" evidence="2">
    <location>
        <begin position="469"/>
        <end position="489"/>
    </location>
</feature>
<feature type="topological domain" description="Extracellular" evidence="2">
    <location>
        <begin position="490"/>
        <end position="492"/>
    </location>
</feature>
<feature type="transmembrane region" description="Helical" evidence="2">
    <location>
        <begin position="493"/>
        <end position="513"/>
    </location>
</feature>
<feature type="topological domain" description="Cytoplasmic" evidence="2">
    <location>
        <begin position="514"/>
        <end position="538"/>
    </location>
</feature>
<feature type="region of interest" description="Disordered" evidence="3">
    <location>
        <begin position="1"/>
        <end position="36"/>
    </location>
</feature>
<feature type="glycosylation site" description="N-linked (GlcNAc...) asparagine" evidence="2">
    <location>
        <position position="321"/>
    </location>
</feature>
<feature type="glycosylation site" description="N-linked (GlcNAc...) asparagine" evidence="2">
    <location>
        <position position="335"/>
    </location>
</feature>
<feature type="sequence conflict" description="In Ref. 2; AAF36527." evidence="4" ref="2">
    <original>T</original>
    <variation>S</variation>
    <location>
        <position position="2"/>
    </location>
</feature>
<feature type="sequence conflict" description="In Ref. 2; AAF36527." evidence="4" ref="2">
    <original>D</original>
    <variation>G</variation>
    <location>
        <position position="6"/>
    </location>
</feature>
<feature type="sequence conflict" description="In Ref. 2; AAF36527." evidence="4" ref="2">
    <original>N</original>
    <variation>T</variation>
    <location>
        <position position="137"/>
    </location>
</feature>
<feature type="sequence conflict" description="In Ref. 2; AAF36527." evidence="4" ref="2">
    <original>R</original>
    <variation>G</variation>
    <location>
        <position position="164"/>
    </location>
</feature>
<feature type="sequence conflict" description="In Ref. 2; AAF36527." evidence="4" ref="2">
    <original>N</original>
    <variation>D</variation>
    <location>
        <position position="185"/>
    </location>
</feature>
<gene>
    <name type="primary">SLC11A1</name>
    <name type="synonym">NRAMP1</name>
</gene>
<keyword id="KW-0967">Endosome</keyword>
<keyword id="KW-0325">Glycoprotein</keyword>
<keyword id="KW-0406">Ion transport</keyword>
<keyword id="KW-0408">Iron</keyword>
<keyword id="KW-0410">Iron transport</keyword>
<keyword id="KW-0458">Lysosome</keyword>
<keyword id="KW-0472">Membrane</keyword>
<keyword id="KW-1185">Reference proteome</keyword>
<keyword id="KW-0812">Transmembrane</keyword>
<keyword id="KW-1133">Transmembrane helix</keyword>
<keyword id="KW-0813">Transport</keyword>
<accession>O77741</accession>
<accession>Q9N1Y2</accession>
<reference key="1">
    <citation type="journal article" date="1997" name="J. Anim. Sci.">
        <title>Rapid communication: cloning of a pig full-length natural resistance associated macrophage protein (NRAMP1) cDNA.</title>
        <authorList>
            <person name="Tuggle C.K."/>
            <person name="Schmitz C.B."/>
            <person name="Gingerich-Feil D."/>
        </authorList>
    </citation>
    <scope>NUCLEOTIDE SEQUENCE [MRNA]</scope>
    <source>
        <tissue>Spleen</tissue>
    </source>
</reference>
<reference key="2">
    <citation type="journal article" date="2000" name="Infect. Immun.">
        <title>Cloning of porcine NRAMP1 and its induction by lipopolysaccharide, tumor necrosis factor alpha, and interleukin-1beta: role of CD14 and mitogen-activated protein kinases.</title>
        <authorList>
            <person name="Zhang G."/>
            <person name="Wu H."/>
            <person name="Ross C.R."/>
            <person name="Minton E."/>
            <person name="Blecha F."/>
        </authorList>
    </citation>
    <scope>NUCLEOTIDE SEQUENCE [MRNA]</scope>
</reference>
<organism>
    <name type="scientific">Sus scrofa</name>
    <name type="common">Pig</name>
    <dbReference type="NCBI Taxonomy" id="9823"/>
    <lineage>
        <taxon>Eukaryota</taxon>
        <taxon>Metazoa</taxon>
        <taxon>Chordata</taxon>
        <taxon>Craniata</taxon>
        <taxon>Vertebrata</taxon>
        <taxon>Euteleostomi</taxon>
        <taxon>Mammalia</taxon>
        <taxon>Eutheria</taxon>
        <taxon>Laurasiatheria</taxon>
        <taxon>Artiodactyla</taxon>
        <taxon>Suina</taxon>
        <taxon>Suidae</taxon>
        <taxon>Sus</taxon>
    </lineage>
</organism>
<comment type="function">
    <text evidence="1">Macrophage-specific antiporter that fluxes metal ions in either direction against a proton gradient. Localized to late endosomal lysosomal membranes, delivers bivalent cations from the cytosol into these acidic compartments where they may directly affect antimicrobial activity. Involved in iron metabolism and host natural resistance to infection with intracellular parasites. Pathogen resistance involves sequestration of Fe(2+) and Mn(2+), cofactors of both prokaryotic and eukaryotic catalases and superoxide dismutases, not only to protect the macrophage against its own generation of reactive oxygen species, but to deny the cations to the pathogen for synthesis of its protective enzymes.</text>
</comment>
<comment type="catalytic activity">
    <reaction evidence="1">
        <text>Zn(2+)(in) + H(+)(out) = Zn(2+)(out) + H(+)(in)</text>
        <dbReference type="Rhea" id="RHEA:28839"/>
        <dbReference type="ChEBI" id="CHEBI:15378"/>
        <dbReference type="ChEBI" id="CHEBI:29105"/>
    </reaction>
</comment>
<comment type="catalytic activity">
    <reaction evidence="1">
        <text>Fe(2+)(in) + H(+)(out) = Fe(2+)(out) + H(+)(in)</text>
        <dbReference type="Rhea" id="RHEA:29439"/>
        <dbReference type="ChEBI" id="CHEBI:15378"/>
        <dbReference type="ChEBI" id="CHEBI:29033"/>
    </reaction>
</comment>
<comment type="catalytic activity">
    <reaction evidence="1">
        <text>Mn(2+)(in) + H(+)(out) = Mn(2+)(out) + H(+)(in)</text>
        <dbReference type="Rhea" id="RHEA:73063"/>
        <dbReference type="ChEBI" id="CHEBI:15378"/>
        <dbReference type="ChEBI" id="CHEBI:29035"/>
    </reaction>
</comment>
<comment type="subcellular location">
    <subcellularLocation>
        <location evidence="1">Late endosome membrane</location>
        <topology evidence="2">Multi-pass membrane protein</topology>
    </subcellularLocation>
    <subcellularLocation>
        <location evidence="1">Lysosome membrane</location>
        <topology evidence="2">Multi-pass membrane protein</topology>
    </subcellularLocation>
</comment>
<comment type="similarity">
    <text evidence="4">Belongs to the NRAMP family.</text>
</comment>
<protein>
    <recommendedName>
        <fullName>Natural resistance-associated macrophage protein 1</fullName>
        <shortName>NRAMP 1</shortName>
    </recommendedName>
    <alternativeName>
        <fullName>Solute carrier family 11 member 1</fullName>
    </alternativeName>
</protein>
<proteinExistence type="evidence at transcript level"/>
<dbReference type="EMBL" id="U55068">
    <property type="protein sequence ID" value="AAC24491.1"/>
    <property type="molecule type" value="mRNA"/>
</dbReference>
<dbReference type="EMBL" id="AF132037">
    <property type="protein sequence ID" value="AAF36527.1"/>
    <property type="molecule type" value="mRNA"/>
</dbReference>
<dbReference type="RefSeq" id="NP_998986.1">
    <property type="nucleotide sequence ID" value="NM_213821.2"/>
</dbReference>
<dbReference type="SMR" id="O77741"/>
<dbReference type="FunCoup" id="O77741">
    <property type="interactions" value="380"/>
</dbReference>
<dbReference type="STRING" id="9823.ENSSSCP00000042337"/>
<dbReference type="GlyCosmos" id="O77741">
    <property type="glycosylation" value="2 sites, No reported glycans"/>
</dbReference>
<dbReference type="GlyGen" id="O77741">
    <property type="glycosylation" value="2 sites"/>
</dbReference>
<dbReference type="PaxDb" id="9823-ENSSSCP00000020374"/>
<dbReference type="GeneID" id="396764"/>
<dbReference type="KEGG" id="ssc:396764"/>
<dbReference type="CTD" id="6556"/>
<dbReference type="eggNOG" id="KOG1291">
    <property type="taxonomic scope" value="Eukaryota"/>
</dbReference>
<dbReference type="InParanoid" id="O77741"/>
<dbReference type="OrthoDB" id="409173at2759"/>
<dbReference type="Proteomes" id="UP000008227">
    <property type="component" value="Unplaced"/>
</dbReference>
<dbReference type="Proteomes" id="UP000314985">
    <property type="component" value="Unplaced"/>
</dbReference>
<dbReference type="Proteomes" id="UP000694570">
    <property type="component" value="Unplaced"/>
</dbReference>
<dbReference type="Proteomes" id="UP000694571">
    <property type="component" value="Unplaced"/>
</dbReference>
<dbReference type="Proteomes" id="UP000694720">
    <property type="component" value="Unplaced"/>
</dbReference>
<dbReference type="Proteomes" id="UP000694722">
    <property type="component" value="Unplaced"/>
</dbReference>
<dbReference type="Proteomes" id="UP000694723">
    <property type="component" value="Unplaced"/>
</dbReference>
<dbReference type="Proteomes" id="UP000694724">
    <property type="component" value="Unplaced"/>
</dbReference>
<dbReference type="Proteomes" id="UP000694725">
    <property type="component" value="Unplaced"/>
</dbReference>
<dbReference type="Proteomes" id="UP000694726">
    <property type="component" value="Unplaced"/>
</dbReference>
<dbReference type="Proteomes" id="UP000694727">
    <property type="component" value="Unplaced"/>
</dbReference>
<dbReference type="Proteomes" id="UP000694728">
    <property type="component" value="Unplaced"/>
</dbReference>
<dbReference type="GO" id="GO:0010008">
    <property type="term" value="C:endosome membrane"/>
    <property type="evidence" value="ECO:0000318"/>
    <property type="project" value="GO_Central"/>
</dbReference>
<dbReference type="GO" id="GO:0031902">
    <property type="term" value="C:late endosome membrane"/>
    <property type="evidence" value="ECO:0007669"/>
    <property type="project" value="UniProtKB-SubCell"/>
</dbReference>
<dbReference type="GO" id="GO:0005765">
    <property type="term" value="C:lysosomal membrane"/>
    <property type="evidence" value="ECO:0000318"/>
    <property type="project" value="GO_Central"/>
</dbReference>
<dbReference type="GO" id="GO:0030670">
    <property type="term" value="C:phagocytic vesicle membrane"/>
    <property type="evidence" value="ECO:0000318"/>
    <property type="project" value="GO_Central"/>
</dbReference>
<dbReference type="GO" id="GO:0005886">
    <property type="term" value="C:plasma membrane"/>
    <property type="evidence" value="ECO:0000318"/>
    <property type="project" value="GO_Central"/>
</dbReference>
<dbReference type="GO" id="GO:0015086">
    <property type="term" value="F:cadmium ion transmembrane transporter activity"/>
    <property type="evidence" value="ECO:0000318"/>
    <property type="project" value="GO_Central"/>
</dbReference>
<dbReference type="GO" id="GO:0005381">
    <property type="term" value="F:iron ion transmembrane transporter activity"/>
    <property type="evidence" value="ECO:0000250"/>
    <property type="project" value="UniProtKB"/>
</dbReference>
<dbReference type="GO" id="GO:0005384">
    <property type="term" value="F:manganese ion transmembrane transporter activity"/>
    <property type="evidence" value="ECO:0000250"/>
    <property type="project" value="UniProtKB"/>
</dbReference>
<dbReference type="GO" id="GO:0051139">
    <property type="term" value="F:metal cation:proton antiporter activity"/>
    <property type="evidence" value="ECO:0000250"/>
    <property type="project" value="UniProtKB"/>
</dbReference>
<dbReference type="GO" id="GO:0034755">
    <property type="term" value="P:iron ion transmembrane transport"/>
    <property type="evidence" value="ECO:0000318"/>
    <property type="project" value="GO_Central"/>
</dbReference>
<dbReference type="GO" id="GO:0006826">
    <property type="term" value="P:iron ion transport"/>
    <property type="evidence" value="ECO:0000250"/>
    <property type="project" value="UniProtKB"/>
</dbReference>
<dbReference type="GO" id="GO:0006828">
    <property type="term" value="P:manganese ion transport"/>
    <property type="evidence" value="ECO:0000250"/>
    <property type="project" value="UniProtKB"/>
</dbReference>
<dbReference type="GO" id="GO:0000165">
    <property type="term" value="P:MAPK cascade"/>
    <property type="evidence" value="ECO:0000314"/>
    <property type="project" value="MGI"/>
</dbReference>
<dbReference type="GO" id="GO:0032496">
    <property type="term" value="P:response to lipopolysaccharide"/>
    <property type="evidence" value="ECO:0000314"/>
    <property type="project" value="MGI"/>
</dbReference>
<dbReference type="HAMAP" id="MF_00221">
    <property type="entry name" value="NRAMP"/>
    <property type="match status" value="1"/>
</dbReference>
<dbReference type="InterPro" id="IPR001046">
    <property type="entry name" value="NRAMP_fam"/>
</dbReference>
<dbReference type="NCBIfam" id="TIGR01197">
    <property type="entry name" value="nramp"/>
    <property type="match status" value="1"/>
</dbReference>
<dbReference type="NCBIfam" id="NF037982">
    <property type="entry name" value="Nramp_1"/>
    <property type="match status" value="1"/>
</dbReference>
<dbReference type="PANTHER" id="PTHR11706:SF52">
    <property type="entry name" value="NATURAL RESISTANCE-ASSOCIATED MACROPHAGE PROTEIN 1"/>
    <property type="match status" value="1"/>
</dbReference>
<dbReference type="PANTHER" id="PTHR11706">
    <property type="entry name" value="SOLUTE CARRIER PROTEIN FAMILY 11 MEMBER"/>
    <property type="match status" value="1"/>
</dbReference>
<dbReference type="Pfam" id="PF01566">
    <property type="entry name" value="Nramp"/>
    <property type="match status" value="1"/>
</dbReference>
<dbReference type="PRINTS" id="PR00447">
    <property type="entry name" value="NATRESASSCMP"/>
</dbReference>
<name>NRAM1_PIG</name>
<sequence length="538" mass="59012">MTGDTDPPKQSRTQYGSISSSPSPGPPQVPPGGTYLSEKIPIPNAEPGTFSLRKLWAFTGPGFLMSIAYLDPGNIQSDLQAGAVAGFKLLWVLLWATVLGLLCQRLAARLGVVTGKDLGEICHLYYPKVPRTLLWLNMELAIVGSDMQEVIGTAIAFNLLSAGRIPLWGGVLITVVDTFFFLYLNNYGLRKLEAFFAFLIAIMAFTFGYEYVVARPAQGALLRGLFLPSCSGCGQPELLQAVGIVGAIIMPHNIYLHSALVKSREVDRTRREDIREANMYFLIESTIALFVSFFINLFVMAVFGQAFYQQTNQAAFNICANSSLHDYAKIFPRNNLTVAVDFYQGGVILGCLFGPAALYIWAVGLLAAGQSSTMTGTYAGQFVMEGFLKLRWSRFARLLLTRSCAILPALLVAVFKELQDLSSLNDLLNVLQSLLLPFAVLPILTFTSMPALMQEFASGRVNKVITSSIMLLVCAINFYFLVSYLPSLPHPAYFGLVALLAVIYLGLTTYLVWTCLIAHGATLLVHSSHQHFLYGLLE</sequence>